<proteinExistence type="inferred from homology"/>
<gene>
    <name evidence="1" type="primary">arnT</name>
    <name type="ordered locus">EFER_0912</name>
</gene>
<sequence>MKSARYILAFIAFIALYYFLPMNTRLLWQPDETRYAEISREMLASGDWIVPHMLGLRYFEKPIAGYWFNSIGQWLFGNSNFAVRAGVIFATLITALLVAWFAMRLWRDKRLAVLSAVIYLSLIIVYGIGTYAVLDPFIAFWLMAGMCSFWLAMQAQTWKGKSAGFLLLGLTCGMGVMTKGFLALAVPVLSVLPWVVAQKRWKDLFMYGGLAIVSCVLIILPWGLAIAAREPDFWHYFFWVEHIQRFAQDDAQHKAPFWYYIPIILLGSLPWLGLLPGALRSGWQNRGHHAAAFYLLCWIVMPLLFFSMAKGKLLTYILSCFAPLAILMAGYGIQSAQKNIIALRFNGWINIAFGITGIIATFVVSPWGPIKSPVWAHFESYKVFCSWAIFSLWAFFGWYTLTDSEKRWPYAALCPLGLALLVGFAMPDRVRESKQPQFFVGMTSEMLKPSRYILTDSVGVAAGLAWSLQRDDIMLYQQRGELKYGLDYPDVKDKFIPAASFTSWLNQHRQEGIITLVLSVDRDEDINRLAIPPADAVDHQGRLVLIQYLPK</sequence>
<name>ARNT_ESCF3</name>
<comment type="function">
    <text evidence="1">Catalyzes the transfer of the L-Ara4N moiety of the glycolipid undecaprenyl phosphate-alpha-L-Ara4N to lipid A. The modified arabinose is attached to lipid A and is required for resistance to polymyxin and cationic antimicrobial peptides.</text>
</comment>
<comment type="catalytic activity">
    <reaction evidence="1">
        <text>4-amino-4-deoxy-alpha-L-arabinopyranosyl di-trans,octa-cis-undecaprenyl phosphate + lipid IVA = lipid IIA + di-trans,octa-cis-undecaprenyl phosphate.</text>
        <dbReference type="EC" id="2.4.2.43"/>
    </reaction>
</comment>
<comment type="pathway">
    <text evidence="1">Lipopolysaccharide metabolism; 4-amino-4-deoxy-beta-L-arabinose-lipid A biosynthesis.</text>
</comment>
<comment type="subcellular location">
    <subcellularLocation>
        <location evidence="1">Cell inner membrane</location>
        <topology evidence="1">Multi-pass membrane protein</topology>
    </subcellularLocation>
</comment>
<comment type="similarity">
    <text evidence="1">Belongs to the glycosyltransferase 83 family.</text>
</comment>
<comment type="sequence caution" evidence="2">
    <conflict type="erroneous initiation">
        <sequence resource="EMBL-CDS" id="CAQ88447"/>
    </conflict>
</comment>
<accession>B7LM74</accession>
<evidence type="ECO:0000255" key="1">
    <source>
        <dbReference type="HAMAP-Rule" id="MF_01165"/>
    </source>
</evidence>
<evidence type="ECO:0000305" key="2"/>
<protein>
    <recommendedName>
        <fullName evidence="1">Undecaprenyl phosphate-alpha-4-amino-4-deoxy-L-arabinose arabinosyl transferase</fullName>
        <ecNumber evidence="1">2.4.2.43</ecNumber>
    </recommendedName>
    <alternativeName>
        <fullName evidence="1">4-amino-4-deoxy-L-arabinose lipid A transferase</fullName>
    </alternativeName>
    <alternativeName>
        <fullName evidence="1">Lipid IV(A) 4-amino-4-deoxy-L-arabinosyltransferase</fullName>
    </alternativeName>
    <alternativeName>
        <fullName evidence="1">Undecaprenyl phosphate-alpha-L-Ara4N transferase</fullName>
    </alternativeName>
</protein>
<dbReference type="EC" id="2.4.2.43" evidence="1"/>
<dbReference type="EMBL" id="CU928158">
    <property type="protein sequence ID" value="CAQ88447.1"/>
    <property type="status" value="ALT_INIT"/>
    <property type="molecule type" value="Genomic_DNA"/>
</dbReference>
<dbReference type="RefSeq" id="WP_000833661.1">
    <property type="nucleotide sequence ID" value="NC_011740.1"/>
</dbReference>
<dbReference type="SMR" id="B7LM74"/>
<dbReference type="CAZy" id="GT83">
    <property type="family name" value="Glycosyltransferase Family 83"/>
</dbReference>
<dbReference type="GeneID" id="75058029"/>
<dbReference type="KEGG" id="efe:EFER_0912"/>
<dbReference type="HOGENOM" id="CLU_019200_2_1_6"/>
<dbReference type="OrthoDB" id="9775035at2"/>
<dbReference type="UniPathway" id="UPA00037"/>
<dbReference type="Proteomes" id="UP000000745">
    <property type="component" value="Chromosome"/>
</dbReference>
<dbReference type="GO" id="GO:0005886">
    <property type="term" value="C:plasma membrane"/>
    <property type="evidence" value="ECO:0007669"/>
    <property type="project" value="UniProtKB-SubCell"/>
</dbReference>
<dbReference type="GO" id="GO:0103015">
    <property type="term" value="F:4-amino-4-deoxy-L-arabinose transferase activity"/>
    <property type="evidence" value="ECO:0007669"/>
    <property type="project" value="UniProtKB-EC"/>
</dbReference>
<dbReference type="GO" id="GO:0000030">
    <property type="term" value="F:mannosyltransferase activity"/>
    <property type="evidence" value="ECO:0007669"/>
    <property type="project" value="InterPro"/>
</dbReference>
<dbReference type="GO" id="GO:0009245">
    <property type="term" value="P:lipid A biosynthetic process"/>
    <property type="evidence" value="ECO:0007669"/>
    <property type="project" value="UniProtKB-UniRule"/>
</dbReference>
<dbReference type="GO" id="GO:0009103">
    <property type="term" value="P:lipopolysaccharide biosynthetic process"/>
    <property type="evidence" value="ECO:0007669"/>
    <property type="project" value="UniProtKB-KW"/>
</dbReference>
<dbReference type="GO" id="GO:0006493">
    <property type="term" value="P:protein O-linked glycosylation"/>
    <property type="evidence" value="ECO:0007669"/>
    <property type="project" value="InterPro"/>
</dbReference>
<dbReference type="GO" id="GO:0010041">
    <property type="term" value="P:response to iron(III) ion"/>
    <property type="evidence" value="ECO:0007669"/>
    <property type="project" value="TreeGrafter"/>
</dbReference>
<dbReference type="HAMAP" id="MF_01165">
    <property type="entry name" value="ArnT_transfer"/>
    <property type="match status" value="1"/>
</dbReference>
<dbReference type="InterPro" id="IPR022839">
    <property type="entry name" value="ArnT_tfrase"/>
</dbReference>
<dbReference type="InterPro" id="IPR003342">
    <property type="entry name" value="Glyco_trans_39/83"/>
</dbReference>
<dbReference type="InterPro" id="IPR050297">
    <property type="entry name" value="LipidA_mod_glycosyltrf_83"/>
</dbReference>
<dbReference type="NCBIfam" id="NF009784">
    <property type="entry name" value="PRK13279.1"/>
    <property type="match status" value="1"/>
</dbReference>
<dbReference type="PANTHER" id="PTHR33908">
    <property type="entry name" value="MANNOSYLTRANSFERASE YKCB-RELATED"/>
    <property type="match status" value="1"/>
</dbReference>
<dbReference type="PANTHER" id="PTHR33908:SF3">
    <property type="entry name" value="UNDECAPRENYL PHOSPHATE-ALPHA-4-AMINO-4-DEOXY-L-ARABINOSE ARABINOSYL TRANSFERASE"/>
    <property type="match status" value="1"/>
</dbReference>
<dbReference type="Pfam" id="PF02366">
    <property type="entry name" value="PMT"/>
    <property type="match status" value="1"/>
</dbReference>
<organism>
    <name type="scientific">Escherichia fergusonii (strain ATCC 35469 / DSM 13698 / CCUG 18766 / IAM 14443 / JCM 21226 / LMG 7866 / NBRC 102419 / NCTC 12128 / CDC 0568-73)</name>
    <dbReference type="NCBI Taxonomy" id="585054"/>
    <lineage>
        <taxon>Bacteria</taxon>
        <taxon>Pseudomonadati</taxon>
        <taxon>Pseudomonadota</taxon>
        <taxon>Gammaproteobacteria</taxon>
        <taxon>Enterobacterales</taxon>
        <taxon>Enterobacteriaceae</taxon>
        <taxon>Escherichia</taxon>
    </lineage>
</organism>
<keyword id="KW-0997">Cell inner membrane</keyword>
<keyword id="KW-1003">Cell membrane</keyword>
<keyword id="KW-0328">Glycosyltransferase</keyword>
<keyword id="KW-0441">Lipid A biosynthesis</keyword>
<keyword id="KW-0444">Lipid biosynthesis</keyword>
<keyword id="KW-0443">Lipid metabolism</keyword>
<keyword id="KW-0448">Lipopolysaccharide biosynthesis</keyword>
<keyword id="KW-0472">Membrane</keyword>
<keyword id="KW-0808">Transferase</keyword>
<keyword id="KW-0812">Transmembrane</keyword>
<keyword id="KW-1133">Transmembrane helix</keyword>
<feature type="chain" id="PRO_0000380012" description="Undecaprenyl phosphate-alpha-4-amino-4-deoxy-L-arabinose arabinosyl transferase">
    <location>
        <begin position="1"/>
        <end position="551"/>
    </location>
</feature>
<feature type="transmembrane region" description="Helical" evidence="1">
    <location>
        <begin position="7"/>
        <end position="27"/>
    </location>
</feature>
<feature type="transmembrane region" description="Helical" evidence="1">
    <location>
        <begin position="81"/>
        <end position="101"/>
    </location>
</feature>
<feature type="transmembrane region" description="Helical" evidence="1">
    <location>
        <begin position="111"/>
        <end position="133"/>
    </location>
</feature>
<feature type="transmembrane region" description="Helical" evidence="1">
    <location>
        <begin position="137"/>
        <end position="154"/>
    </location>
</feature>
<feature type="transmembrane region" description="Helical" evidence="1">
    <location>
        <begin position="176"/>
        <end position="196"/>
    </location>
</feature>
<feature type="transmembrane region" description="Helical" evidence="1">
    <location>
        <begin position="208"/>
        <end position="228"/>
    </location>
</feature>
<feature type="transmembrane region" description="Helical" evidence="1">
    <location>
        <begin position="255"/>
        <end position="275"/>
    </location>
</feature>
<feature type="transmembrane region" description="Helical" evidence="1">
    <location>
        <begin position="289"/>
        <end position="309"/>
    </location>
</feature>
<feature type="transmembrane region" description="Helical" evidence="1">
    <location>
        <begin position="313"/>
        <end position="333"/>
    </location>
</feature>
<feature type="transmembrane region" description="Helical" evidence="1">
    <location>
        <begin position="347"/>
        <end position="367"/>
    </location>
</feature>
<feature type="transmembrane region" description="Helical" evidence="1">
    <location>
        <begin position="383"/>
        <end position="403"/>
    </location>
</feature>
<feature type="transmembrane region" description="Helical" evidence="1">
    <location>
        <begin position="408"/>
        <end position="428"/>
    </location>
</feature>
<reference key="1">
    <citation type="journal article" date="2009" name="PLoS Genet.">
        <title>Organised genome dynamics in the Escherichia coli species results in highly diverse adaptive paths.</title>
        <authorList>
            <person name="Touchon M."/>
            <person name="Hoede C."/>
            <person name="Tenaillon O."/>
            <person name="Barbe V."/>
            <person name="Baeriswyl S."/>
            <person name="Bidet P."/>
            <person name="Bingen E."/>
            <person name="Bonacorsi S."/>
            <person name="Bouchier C."/>
            <person name="Bouvet O."/>
            <person name="Calteau A."/>
            <person name="Chiapello H."/>
            <person name="Clermont O."/>
            <person name="Cruveiller S."/>
            <person name="Danchin A."/>
            <person name="Diard M."/>
            <person name="Dossat C."/>
            <person name="Karoui M.E."/>
            <person name="Frapy E."/>
            <person name="Garry L."/>
            <person name="Ghigo J.M."/>
            <person name="Gilles A.M."/>
            <person name="Johnson J."/>
            <person name="Le Bouguenec C."/>
            <person name="Lescat M."/>
            <person name="Mangenot S."/>
            <person name="Martinez-Jehanne V."/>
            <person name="Matic I."/>
            <person name="Nassif X."/>
            <person name="Oztas S."/>
            <person name="Petit M.A."/>
            <person name="Pichon C."/>
            <person name="Rouy Z."/>
            <person name="Ruf C.S."/>
            <person name="Schneider D."/>
            <person name="Tourret J."/>
            <person name="Vacherie B."/>
            <person name="Vallenet D."/>
            <person name="Medigue C."/>
            <person name="Rocha E.P.C."/>
            <person name="Denamur E."/>
        </authorList>
    </citation>
    <scope>NUCLEOTIDE SEQUENCE [LARGE SCALE GENOMIC DNA]</scope>
    <source>
        <strain>ATCC 35469 / DSM 13698 / BCRC 15582 / CCUG 18766 / IAM 14443 / JCM 21226 / LMG 7866 / NBRC 102419 / NCTC 12128 / CDC 0568-73</strain>
    </source>
</reference>